<evidence type="ECO:0000255" key="1">
    <source>
        <dbReference type="HAMAP-Rule" id="MF_00480"/>
    </source>
</evidence>
<evidence type="ECO:0000256" key="2">
    <source>
        <dbReference type="SAM" id="MobiDB-lite"/>
    </source>
</evidence>
<evidence type="ECO:0000305" key="3"/>
<keyword id="KW-1185">Reference proteome</keyword>
<keyword id="KW-0687">Ribonucleoprotein</keyword>
<keyword id="KW-0689">Ribosomal protein</keyword>
<keyword id="KW-0694">RNA-binding</keyword>
<keyword id="KW-0699">rRNA-binding</keyword>
<organism>
    <name type="scientific">Halobacterium salinarum (strain ATCC 700922 / JCM 11081 / NRC-1)</name>
    <name type="common">Halobacterium halobium</name>
    <dbReference type="NCBI Taxonomy" id="64091"/>
    <lineage>
        <taxon>Archaea</taxon>
        <taxon>Methanobacteriati</taxon>
        <taxon>Methanobacteriota</taxon>
        <taxon>Stenosarchaea group</taxon>
        <taxon>Halobacteria</taxon>
        <taxon>Halobacteriales</taxon>
        <taxon>Halobacteriaceae</taxon>
        <taxon>Halobacterium</taxon>
        <taxon>Halobacterium salinarum NRC-34001</taxon>
    </lineage>
</organism>
<protein>
    <recommendedName>
        <fullName evidence="1">Small ribosomal subunit protein uS7</fullName>
    </recommendedName>
    <alternativeName>
        <fullName evidence="3">30S ribosomal protein S7</fullName>
    </alternativeName>
</protein>
<feature type="chain" id="PRO_0000124396" description="Small ribosomal subunit protein uS7">
    <location>
        <begin position="1"/>
        <end position="210"/>
    </location>
</feature>
<feature type="region of interest" description="Disordered" evidence="2">
    <location>
        <begin position="1"/>
        <end position="23"/>
    </location>
</feature>
<feature type="compositionally biased region" description="Acidic residues" evidence="2">
    <location>
        <begin position="1"/>
        <end position="22"/>
    </location>
</feature>
<proteinExistence type="inferred from homology"/>
<dbReference type="EMBL" id="AE004437">
    <property type="protein sequence ID" value="AAG20688.1"/>
    <property type="molecule type" value="Genomic_DNA"/>
</dbReference>
<dbReference type="PIR" id="D84415">
    <property type="entry name" value="D84415"/>
</dbReference>
<dbReference type="RefSeq" id="WP_010903992.1">
    <property type="nucleotide sequence ID" value="NC_002607.1"/>
</dbReference>
<dbReference type="SMR" id="P0CX01"/>
<dbReference type="FunCoup" id="P0CX01">
    <property type="interactions" value="150"/>
</dbReference>
<dbReference type="STRING" id="64091.VNG_2657G"/>
<dbReference type="PaxDb" id="64091-VNG_2657G"/>
<dbReference type="KEGG" id="hal:VNG_2657G"/>
<dbReference type="PATRIC" id="fig|64091.14.peg.2065"/>
<dbReference type="HOGENOM" id="CLU_063975_0_0_2"/>
<dbReference type="InParanoid" id="P0CX01"/>
<dbReference type="OrthoDB" id="45346at2157"/>
<dbReference type="PhylomeDB" id="P0CX01"/>
<dbReference type="Proteomes" id="UP000000554">
    <property type="component" value="Chromosome"/>
</dbReference>
<dbReference type="GO" id="GO:0022627">
    <property type="term" value="C:cytosolic small ribosomal subunit"/>
    <property type="evidence" value="ECO:0000318"/>
    <property type="project" value="GO_Central"/>
</dbReference>
<dbReference type="GO" id="GO:0005840">
    <property type="term" value="C:ribosome"/>
    <property type="evidence" value="ECO:0000318"/>
    <property type="project" value="GO_Central"/>
</dbReference>
<dbReference type="GO" id="GO:0003729">
    <property type="term" value="F:mRNA binding"/>
    <property type="evidence" value="ECO:0000318"/>
    <property type="project" value="GO_Central"/>
</dbReference>
<dbReference type="GO" id="GO:0019843">
    <property type="term" value="F:rRNA binding"/>
    <property type="evidence" value="ECO:0000318"/>
    <property type="project" value="GO_Central"/>
</dbReference>
<dbReference type="GO" id="GO:0003735">
    <property type="term" value="F:structural constituent of ribosome"/>
    <property type="evidence" value="ECO:0000318"/>
    <property type="project" value="GO_Central"/>
</dbReference>
<dbReference type="GO" id="GO:0000028">
    <property type="term" value="P:ribosomal small subunit assembly"/>
    <property type="evidence" value="ECO:0000318"/>
    <property type="project" value="GO_Central"/>
</dbReference>
<dbReference type="GO" id="GO:0006412">
    <property type="term" value="P:translation"/>
    <property type="evidence" value="ECO:0000318"/>
    <property type="project" value="GO_Central"/>
</dbReference>
<dbReference type="CDD" id="cd14867">
    <property type="entry name" value="uS7_Eukaryote"/>
    <property type="match status" value="1"/>
</dbReference>
<dbReference type="Gene3D" id="1.10.455.10">
    <property type="entry name" value="Ribosomal protein S7 domain"/>
    <property type="match status" value="1"/>
</dbReference>
<dbReference type="HAMAP" id="MF_00480_A">
    <property type="entry name" value="Ribosomal_uS7_A"/>
    <property type="match status" value="1"/>
</dbReference>
<dbReference type="InterPro" id="IPR000235">
    <property type="entry name" value="Ribosomal_uS7"/>
</dbReference>
<dbReference type="InterPro" id="IPR026018">
    <property type="entry name" value="Ribosomal_uS7_arc"/>
</dbReference>
<dbReference type="InterPro" id="IPR020606">
    <property type="entry name" value="Ribosomal_uS7_CS"/>
</dbReference>
<dbReference type="InterPro" id="IPR023798">
    <property type="entry name" value="Ribosomal_uS7_dom"/>
</dbReference>
<dbReference type="InterPro" id="IPR036823">
    <property type="entry name" value="Ribosomal_uS7_dom_sf"/>
</dbReference>
<dbReference type="InterPro" id="IPR005716">
    <property type="entry name" value="Ribosomal_uS7_euk/arc"/>
</dbReference>
<dbReference type="NCBIfam" id="NF003106">
    <property type="entry name" value="PRK04027.1"/>
    <property type="match status" value="1"/>
</dbReference>
<dbReference type="NCBIfam" id="TIGR01028">
    <property type="entry name" value="uS7_euk_arch"/>
    <property type="match status" value="1"/>
</dbReference>
<dbReference type="PANTHER" id="PTHR11205">
    <property type="entry name" value="RIBOSOMAL PROTEIN S7"/>
    <property type="match status" value="1"/>
</dbReference>
<dbReference type="Pfam" id="PF00177">
    <property type="entry name" value="Ribosomal_S7"/>
    <property type="match status" value="1"/>
</dbReference>
<dbReference type="PIRSF" id="PIRSF002122">
    <property type="entry name" value="RPS7p_RPS7a_RPS5e_RPS7o"/>
    <property type="match status" value="1"/>
</dbReference>
<dbReference type="SUPFAM" id="SSF47973">
    <property type="entry name" value="Ribosomal protein S7"/>
    <property type="match status" value="1"/>
</dbReference>
<dbReference type="PROSITE" id="PS00052">
    <property type="entry name" value="RIBOSOMAL_S7"/>
    <property type="match status" value="1"/>
</dbReference>
<sequence>MSDEQPAEDETEEAAAESEDTQEVAANAKLFGKWDVAEIHYEDPSTRRYLAVTPVAHTMGRHAQKQFKKSEISIVERLANRLMKTGANAGKKQQALKIVRDAFDIVHERTDENPIQVLVSAVENAAPREETVRLKYGGISVPQAVDTAPQRRVDQALKFLADGAHSASFKTPTDAAEALANQLAGAADYNVQTYAIGQKKEKERVAAAAR</sequence>
<gene>
    <name evidence="1" type="primary">rps7</name>
    <name type="ordered locus">VNG_2657G</name>
</gene>
<comment type="function">
    <text evidence="1">One of the primary rRNA binding proteins, it binds directly to 16S rRNA where it nucleates assembly of the head domain of the 30S subunit. Is located at the subunit interface close to the decoding center.</text>
</comment>
<comment type="subunit">
    <text evidence="1">Part of the 30S ribosomal subunit. Contacts proteins S9 and S11.</text>
</comment>
<comment type="similarity">
    <text evidence="1">Belongs to the universal ribosomal protein uS7 family.</text>
</comment>
<accession>P0CX01</accession>
<accession>P15763</accession>
<accession>Q9HM83</accession>
<reference key="1">
    <citation type="journal article" date="2000" name="Proc. Natl. Acad. Sci. U.S.A.">
        <title>Genome sequence of Halobacterium species NRC-1.</title>
        <authorList>
            <person name="Ng W.V."/>
            <person name="Kennedy S.P."/>
            <person name="Mahairas G.G."/>
            <person name="Berquist B."/>
            <person name="Pan M."/>
            <person name="Shukla H.D."/>
            <person name="Lasky S.R."/>
            <person name="Baliga N.S."/>
            <person name="Thorsson V."/>
            <person name="Sbrogna J."/>
            <person name="Swartzell S."/>
            <person name="Weir D."/>
            <person name="Hall J."/>
            <person name="Dahl T.A."/>
            <person name="Welti R."/>
            <person name="Goo Y.A."/>
            <person name="Leithauser B."/>
            <person name="Keller K."/>
            <person name="Cruz R."/>
            <person name="Danson M.J."/>
            <person name="Hough D.W."/>
            <person name="Maddocks D.G."/>
            <person name="Jablonski P.E."/>
            <person name="Krebs M.P."/>
            <person name="Angevine C.M."/>
            <person name="Dale H."/>
            <person name="Isenbarger T.A."/>
            <person name="Peck R.F."/>
            <person name="Pohlschroder M."/>
            <person name="Spudich J.L."/>
            <person name="Jung K.-H."/>
            <person name="Alam M."/>
            <person name="Freitas T."/>
            <person name="Hou S."/>
            <person name="Daniels C.J."/>
            <person name="Dennis P.P."/>
            <person name="Omer A.D."/>
            <person name="Ebhardt H."/>
            <person name="Lowe T.M."/>
            <person name="Liang P."/>
            <person name="Riley M."/>
            <person name="Hood L."/>
            <person name="DasSarma S."/>
        </authorList>
    </citation>
    <scope>NUCLEOTIDE SEQUENCE [LARGE SCALE GENOMIC DNA]</scope>
    <source>
        <strain>ATCC 700922 / JCM 11081 / NRC-1</strain>
    </source>
</reference>
<name>RS7_HALSA</name>